<reference key="1">
    <citation type="journal article" date="2002" name="Nature">
        <title>The genome sequence and structure of rice chromosome 1.</title>
        <authorList>
            <person name="Sasaki T."/>
            <person name="Matsumoto T."/>
            <person name="Yamamoto K."/>
            <person name="Sakata K."/>
            <person name="Baba T."/>
            <person name="Katayose Y."/>
            <person name="Wu J."/>
            <person name="Niimura Y."/>
            <person name="Cheng Z."/>
            <person name="Nagamura Y."/>
            <person name="Antonio B.A."/>
            <person name="Kanamori H."/>
            <person name="Hosokawa S."/>
            <person name="Masukawa M."/>
            <person name="Arikawa K."/>
            <person name="Chiden Y."/>
            <person name="Hayashi M."/>
            <person name="Okamoto M."/>
            <person name="Ando T."/>
            <person name="Aoki H."/>
            <person name="Arita K."/>
            <person name="Hamada M."/>
            <person name="Harada C."/>
            <person name="Hijishita S."/>
            <person name="Honda M."/>
            <person name="Ichikawa Y."/>
            <person name="Idonuma A."/>
            <person name="Iijima M."/>
            <person name="Ikeda M."/>
            <person name="Ikeno M."/>
            <person name="Ito S."/>
            <person name="Ito T."/>
            <person name="Ito Y."/>
            <person name="Ito Y."/>
            <person name="Iwabuchi A."/>
            <person name="Kamiya K."/>
            <person name="Karasawa W."/>
            <person name="Katagiri S."/>
            <person name="Kikuta A."/>
            <person name="Kobayashi N."/>
            <person name="Kono I."/>
            <person name="Machita K."/>
            <person name="Maehara T."/>
            <person name="Mizuno H."/>
            <person name="Mizubayashi T."/>
            <person name="Mukai Y."/>
            <person name="Nagasaki H."/>
            <person name="Nakashima M."/>
            <person name="Nakama Y."/>
            <person name="Nakamichi Y."/>
            <person name="Nakamura M."/>
            <person name="Namiki N."/>
            <person name="Negishi M."/>
            <person name="Ohta I."/>
            <person name="Ono N."/>
            <person name="Saji S."/>
            <person name="Sakai K."/>
            <person name="Shibata M."/>
            <person name="Shimokawa T."/>
            <person name="Shomura A."/>
            <person name="Song J."/>
            <person name="Takazaki Y."/>
            <person name="Terasawa K."/>
            <person name="Tsuji K."/>
            <person name="Waki K."/>
            <person name="Yamagata H."/>
            <person name="Yamane H."/>
            <person name="Yoshiki S."/>
            <person name="Yoshihara R."/>
            <person name="Yukawa K."/>
            <person name="Zhong H."/>
            <person name="Iwama H."/>
            <person name="Endo T."/>
            <person name="Ito H."/>
            <person name="Hahn J.H."/>
            <person name="Kim H.-I."/>
            <person name="Eun M.-Y."/>
            <person name="Yano M."/>
            <person name="Jiang J."/>
            <person name="Gojobori T."/>
        </authorList>
    </citation>
    <scope>NUCLEOTIDE SEQUENCE [LARGE SCALE GENOMIC DNA]</scope>
    <source>
        <strain>cv. Nipponbare</strain>
    </source>
</reference>
<reference key="2">
    <citation type="journal article" date="2005" name="Nature">
        <title>The map-based sequence of the rice genome.</title>
        <authorList>
            <consortium name="International rice genome sequencing project (IRGSP)"/>
        </authorList>
    </citation>
    <scope>NUCLEOTIDE SEQUENCE [LARGE SCALE GENOMIC DNA]</scope>
    <source>
        <strain>cv. Nipponbare</strain>
    </source>
</reference>
<reference key="3">
    <citation type="journal article" date="2008" name="Nucleic Acids Res.">
        <title>The rice annotation project database (RAP-DB): 2008 update.</title>
        <authorList>
            <consortium name="The rice annotation project (RAP)"/>
        </authorList>
    </citation>
    <scope>GENOME REANNOTATION</scope>
    <source>
        <strain>cv. Nipponbare</strain>
    </source>
</reference>
<reference key="4">
    <citation type="journal article" date="2013" name="Rice">
        <title>Improvement of the Oryza sativa Nipponbare reference genome using next generation sequence and optical map data.</title>
        <authorList>
            <person name="Kawahara Y."/>
            <person name="de la Bastide M."/>
            <person name="Hamilton J.P."/>
            <person name="Kanamori H."/>
            <person name="McCombie W.R."/>
            <person name="Ouyang S."/>
            <person name="Schwartz D.C."/>
            <person name="Tanaka T."/>
            <person name="Wu J."/>
            <person name="Zhou S."/>
            <person name="Childs K.L."/>
            <person name="Davidson R.M."/>
            <person name="Lin H."/>
            <person name="Quesada-Ocampo L."/>
            <person name="Vaillancourt B."/>
            <person name="Sakai H."/>
            <person name="Lee S.S."/>
            <person name="Kim J."/>
            <person name="Numa H."/>
            <person name="Itoh T."/>
            <person name="Buell C.R."/>
            <person name="Matsumoto T."/>
        </authorList>
    </citation>
    <scope>GENOME REANNOTATION</scope>
    <source>
        <strain>cv. Nipponbare</strain>
    </source>
</reference>
<reference key="5">
    <citation type="journal article" date="2010" name="Plant Cell">
        <title>Rice xa13 recessive resistance to bacterial blight is defeated by induction of the disease susceptibility gene Os-11N3. The bacterial pathogen Xanthomonas oryzae overcomes rice defenses by regulating host copper redistribution.</title>
        <authorList>
            <person name="Antony G."/>
            <person name="Zhou J."/>
            <person name="Huang S."/>
            <person name="Li T."/>
            <person name="Liu B."/>
            <person name="White F."/>
            <person name="Yang B."/>
            <person name="Yuan M."/>
            <person name="Chu Z."/>
            <person name="Li X."/>
            <person name="Xu C."/>
            <person name="Wang S."/>
        </authorList>
    </citation>
    <scope>FUNCTION</scope>
    <scope>INTERACTION WITH SWEET11 AND COPT2</scope>
    <scope>SUBCELLULAR LOCATION</scope>
    <scope>DISRUPTION PHENOTYPE</scope>
    <source>
        <strain>cv. Mudanjiang 8</strain>
        <strain>cv. Zhonghua 11</strain>
    </source>
</reference>
<keyword id="KW-1003">Cell membrane</keyword>
<keyword id="KW-0186">Copper</keyword>
<keyword id="KW-0187">Copper transport</keyword>
<keyword id="KW-0406">Ion transport</keyword>
<keyword id="KW-0472">Membrane</keyword>
<keyword id="KW-0611">Plant defense</keyword>
<keyword id="KW-1185">Reference proteome</keyword>
<keyword id="KW-0812">Transmembrane</keyword>
<keyword id="KW-1133">Transmembrane helix</keyword>
<keyword id="KW-0813">Transport</keyword>
<gene>
    <name type="primary">COPT1</name>
    <name type="ordered locus">Os01g0770700</name>
    <name type="ordered locus">LOC_Os01g56420</name>
    <name type="ORF">P0665A11.22</name>
</gene>
<dbReference type="EMBL" id="AP003106">
    <property type="protein sequence ID" value="BAB56072.1"/>
    <property type="molecule type" value="Genomic_DNA"/>
</dbReference>
<dbReference type="EMBL" id="AP008207">
    <property type="protein sequence ID" value="BAF06293.2"/>
    <property type="molecule type" value="Genomic_DNA"/>
</dbReference>
<dbReference type="EMBL" id="AP014957">
    <property type="protein sequence ID" value="BAS74550.1"/>
    <property type="molecule type" value="Genomic_DNA"/>
</dbReference>
<dbReference type="RefSeq" id="XP_015630809.1">
    <property type="nucleotide sequence ID" value="XM_015775323.1"/>
</dbReference>
<dbReference type="SMR" id="Q94EE4"/>
<dbReference type="FunCoup" id="Q94EE4">
    <property type="interactions" value="701"/>
</dbReference>
<dbReference type="STRING" id="39947.Q94EE4"/>
<dbReference type="PaxDb" id="39947-Q94EE4"/>
<dbReference type="EnsemblPlants" id="Os01t0770700-01">
    <property type="protein sequence ID" value="Os01t0770700-01"/>
    <property type="gene ID" value="Os01g0770700"/>
</dbReference>
<dbReference type="Gramene" id="Os01t0770700-01">
    <property type="protein sequence ID" value="Os01t0770700-01"/>
    <property type="gene ID" value="Os01g0770700"/>
</dbReference>
<dbReference type="KEGG" id="dosa:Os01g0770700"/>
<dbReference type="eggNOG" id="KOG3386">
    <property type="taxonomic scope" value="Eukaryota"/>
</dbReference>
<dbReference type="HOGENOM" id="CLU_079690_1_0_1"/>
<dbReference type="InParanoid" id="Q94EE4"/>
<dbReference type="OMA" id="HTAFYWG"/>
<dbReference type="OrthoDB" id="73901at2759"/>
<dbReference type="Proteomes" id="UP000000763">
    <property type="component" value="Chromosome 1"/>
</dbReference>
<dbReference type="Proteomes" id="UP000059680">
    <property type="component" value="Chromosome 1"/>
</dbReference>
<dbReference type="GO" id="GO:0005886">
    <property type="term" value="C:plasma membrane"/>
    <property type="evidence" value="ECO:0000314"/>
    <property type="project" value="UniProtKB"/>
</dbReference>
<dbReference type="GO" id="GO:0005375">
    <property type="term" value="F:copper ion transmembrane transporter activity"/>
    <property type="evidence" value="ECO:0000315"/>
    <property type="project" value="UniProtKB"/>
</dbReference>
<dbReference type="GO" id="GO:0051119">
    <property type="term" value="F:sugar transmembrane transporter activity"/>
    <property type="evidence" value="ECO:0000250"/>
    <property type="project" value="UniProtKB"/>
</dbReference>
<dbReference type="GO" id="GO:0006825">
    <property type="term" value="P:copper ion transport"/>
    <property type="evidence" value="ECO:0000315"/>
    <property type="project" value="UniProtKB"/>
</dbReference>
<dbReference type="GO" id="GO:0006952">
    <property type="term" value="P:defense response"/>
    <property type="evidence" value="ECO:0007669"/>
    <property type="project" value="UniProtKB-KW"/>
</dbReference>
<dbReference type="InterPro" id="IPR007274">
    <property type="entry name" value="Cop_transporter"/>
</dbReference>
<dbReference type="PANTHER" id="PTHR12483:SF117">
    <property type="entry name" value="COPPER TRANSPORTER 3"/>
    <property type="match status" value="1"/>
</dbReference>
<dbReference type="PANTHER" id="PTHR12483">
    <property type="entry name" value="SOLUTE CARRIER FAMILY 31 COPPER TRANSPORTERS"/>
    <property type="match status" value="1"/>
</dbReference>
<dbReference type="Pfam" id="PF04145">
    <property type="entry name" value="Ctr"/>
    <property type="match status" value="2"/>
</dbReference>
<sequence>MDMGGHDMGGMSPPAAGAAAQGGMGAMKSMRYTHMTFFWGKNSEVLFTMWPGTRGGMYALALIFVFALAVIVEFLGSRRADACLAALARRAPAAGGLARAAVHTVRVGVAYLLMLALMSFNGGVFLVAVAGHAAGFLAFRAGLCGGPAQVEEDRKNDPACC</sequence>
<accession>Q94EE4</accession>
<accession>A0A0P0V8P7</accession>
<accession>Q0JIY5</accession>
<protein>
    <recommendedName>
        <fullName>Copper transporter 1</fullName>
        <shortName>OsCOPT1</shortName>
    </recommendedName>
</protein>
<feature type="chain" id="PRO_0000399998" description="Copper transporter 1">
    <location>
        <begin position="1"/>
        <end position="161"/>
    </location>
</feature>
<feature type="transmembrane region" description="Helical" evidence="1">
    <location>
        <begin position="55"/>
        <end position="75"/>
    </location>
</feature>
<feature type="transmembrane region" description="Helical" evidence="1">
    <location>
        <begin position="109"/>
        <end position="129"/>
    </location>
</feature>
<evidence type="ECO:0000255" key="1"/>
<evidence type="ECO:0000269" key="2">
    <source>
    </source>
</evidence>
<evidence type="ECO:0000305" key="3"/>
<organism>
    <name type="scientific">Oryza sativa subsp. japonica</name>
    <name type="common">Rice</name>
    <dbReference type="NCBI Taxonomy" id="39947"/>
    <lineage>
        <taxon>Eukaryota</taxon>
        <taxon>Viridiplantae</taxon>
        <taxon>Streptophyta</taxon>
        <taxon>Embryophyta</taxon>
        <taxon>Tracheophyta</taxon>
        <taxon>Spermatophyta</taxon>
        <taxon>Magnoliopsida</taxon>
        <taxon>Liliopsida</taxon>
        <taxon>Poales</taxon>
        <taxon>Poaceae</taxon>
        <taxon>BOP clade</taxon>
        <taxon>Oryzoideae</taxon>
        <taxon>Oryzeae</taxon>
        <taxon>Oryzinae</taxon>
        <taxon>Oryza</taxon>
        <taxon>Oryza sativa</taxon>
    </lineage>
</organism>
<name>COPT1_ORYSJ</name>
<proteinExistence type="evidence at transcript level"/>
<comment type="function">
    <text evidence="2">Involved in the transport of copper, in cooperation with SWEET11 and COPT2. Contributes to the removal of copper (Cu) from xylem, and thus to the sensitivity toward bacterial pathogens such as X.oryzae pv. oryzae (Xoo).</text>
</comment>
<comment type="subunit">
    <text evidence="2">Self-interacts. Interacts with SWEET11 and COPT2.</text>
</comment>
<comment type="subcellular location">
    <subcellularLocation>
        <location evidence="2">Cell membrane</location>
        <topology evidence="2">Multi-pass membrane protein</topology>
    </subcellularLocation>
</comment>
<comment type="disruption phenotype">
    <text evidence="2">Reduced copper transport ability, increase in copper content of the xylem, and enhanced resistance against X.oryzae pv. oryzae (Xoo) PXO99.</text>
</comment>
<comment type="similarity">
    <text evidence="3">Belongs to the copper transporter (Ctr) (TC 1.A.56) family. SLC31A subfamily.</text>
</comment>